<protein>
    <recommendedName>
        <fullName>Ankyrin repeat domain-containing protein SOWAHC</fullName>
    </recommendedName>
    <alternativeName>
        <fullName>Ankyrin repeat domain-containing protein 57</fullName>
    </alternativeName>
    <alternativeName>
        <fullName>Protein sosondowah homolog C</fullName>
    </alternativeName>
</protein>
<proteinExistence type="evidence at protein level"/>
<gene>
    <name type="primary">Sowahc</name>
    <name type="synonym">Ankrd57</name>
</gene>
<sequence>MEGSLELSSEAILRFLAERGGRAGHSELVQHFRDVLGGQREQRTRARERFKELVNAVATVRTDPADGTKYVHLKKRFCTGDSPPLEAKLPREPPRIEVTEEPQVPDLAAEPCEGSQLQEANPQLSLGLGGEVSDQEPPAPAQGGAQGKDSPPQEVEAVSWASGPGSSENLKLPPQGEAEGGSSPSGPNTPRSARQNFRDLVLGSSPQLKRSVGPGDGNAGGRSRGGGDSDTASLASSSAEEESSVGASVTLDPLDHAWMLSASEGKWDSLEGLLTCEPGLLSKRDFITGFTCLHWAAKHGRQELLAMLVNFATKHQLPVNINAKSSGGYTALHLAAMHGHVEVVKLLVGAYDADVDIRDYSGRKASQYLSESIAEEIKNLVGALDEDDGDSPAARGGGRWRLSKVLPSHITHKLSPVVEDGAELHHHVPEGWTGGSKAKDSGRKASGSSSGRMKPRLNKIRFRTQIIHTTPSFRDAKPTLEEGEEEEEEEEERSLRGYSSSFKLRPKSNVFG</sequence>
<evidence type="ECO:0000250" key="1">
    <source>
        <dbReference type="UniProtKB" id="Q53LP3"/>
    </source>
</evidence>
<evidence type="ECO:0000256" key="2">
    <source>
        <dbReference type="SAM" id="MobiDB-lite"/>
    </source>
</evidence>
<evidence type="ECO:0000305" key="3"/>
<evidence type="ECO:0007744" key="4">
    <source>
    </source>
</evidence>
<evidence type="ECO:0007744" key="5">
    <source>
    </source>
</evidence>
<evidence type="ECO:0007744" key="6">
    <source>
    </source>
</evidence>
<reference key="1">
    <citation type="journal article" date="2005" name="Science">
        <title>The transcriptional landscape of the mammalian genome.</title>
        <authorList>
            <person name="Carninci P."/>
            <person name="Kasukawa T."/>
            <person name="Katayama S."/>
            <person name="Gough J."/>
            <person name="Frith M.C."/>
            <person name="Maeda N."/>
            <person name="Oyama R."/>
            <person name="Ravasi T."/>
            <person name="Lenhard B."/>
            <person name="Wells C."/>
            <person name="Kodzius R."/>
            <person name="Shimokawa K."/>
            <person name="Bajic V.B."/>
            <person name="Brenner S.E."/>
            <person name="Batalov S."/>
            <person name="Forrest A.R."/>
            <person name="Zavolan M."/>
            <person name="Davis M.J."/>
            <person name="Wilming L.G."/>
            <person name="Aidinis V."/>
            <person name="Allen J.E."/>
            <person name="Ambesi-Impiombato A."/>
            <person name="Apweiler R."/>
            <person name="Aturaliya R.N."/>
            <person name="Bailey T.L."/>
            <person name="Bansal M."/>
            <person name="Baxter L."/>
            <person name="Beisel K.W."/>
            <person name="Bersano T."/>
            <person name="Bono H."/>
            <person name="Chalk A.M."/>
            <person name="Chiu K.P."/>
            <person name="Choudhary V."/>
            <person name="Christoffels A."/>
            <person name="Clutterbuck D.R."/>
            <person name="Crowe M.L."/>
            <person name="Dalla E."/>
            <person name="Dalrymple B.P."/>
            <person name="de Bono B."/>
            <person name="Della Gatta G."/>
            <person name="di Bernardo D."/>
            <person name="Down T."/>
            <person name="Engstrom P."/>
            <person name="Fagiolini M."/>
            <person name="Faulkner G."/>
            <person name="Fletcher C.F."/>
            <person name="Fukushima T."/>
            <person name="Furuno M."/>
            <person name="Futaki S."/>
            <person name="Gariboldi M."/>
            <person name="Georgii-Hemming P."/>
            <person name="Gingeras T.R."/>
            <person name="Gojobori T."/>
            <person name="Green R.E."/>
            <person name="Gustincich S."/>
            <person name="Harbers M."/>
            <person name="Hayashi Y."/>
            <person name="Hensch T.K."/>
            <person name="Hirokawa N."/>
            <person name="Hill D."/>
            <person name="Huminiecki L."/>
            <person name="Iacono M."/>
            <person name="Ikeo K."/>
            <person name="Iwama A."/>
            <person name="Ishikawa T."/>
            <person name="Jakt M."/>
            <person name="Kanapin A."/>
            <person name="Katoh M."/>
            <person name="Kawasawa Y."/>
            <person name="Kelso J."/>
            <person name="Kitamura H."/>
            <person name="Kitano H."/>
            <person name="Kollias G."/>
            <person name="Krishnan S.P."/>
            <person name="Kruger A."/>
            <person name="Kummerfeld S.K."/>
            <person name="Kurochkin I.V."/>
            <person name="Lareau L.F."/>
            <person name="Lazarevic D."/>
            <person name="Lipovich L."/>
            <person name="Liu J."/>
            <person name="Liuni S."/>
            <person name="McWilliam S."/>
            <person name="Madan Babu M."/>
            <person name="Madera M."/>
            <person name="Marchionni L."/>
            <person name="Matsuda H."/>
            <person name="Matsuzawa S."/>
            <person name="Miki H."/>
            <person name="Mignone F."/>
            <person name="Miyake S."/>
            <person name="Morris K."/>
            <person name="Mottagui-Tabar S."/>
            <person name="Mulder N."/>
            <person name="Nakano N."/>
            <person name="Nakauchi H."/>
            <person name="Ng P."/>
            <person name="Nilsson R."/>
            <person name="Nishiguchi S."/>
            <person name="Nishikawa S."/>
            <person name="Nori F."/>
            <person name="Ohara O."/>
            <person name="Okazaki Y."/>
            <person name="Orlando V."/>
            <person name="Pang K.C."/>
            <person name="Pavan W.J."/>
            <person name="Pavesi G."/>
            <person name="Pesole G."/>
            <person name="Petrovsky N."/>
            <person name="Piazza S."/>
            <person name="Reed J."/>
            <person name="Reid J.F."/>
            <person name="Ring B.Z."/>
            <person name="Ringwald M."/>
            <person name="Rost B."/>
            <person name="Ruan Y."/>
            <person name="Salzberg S.L."/>
            <person name="Sandelin A."/>
            <person name="Schneider C."/>
            <person name="Schoenbach C."/>
            <person name="Sekiguchi K."/>
            <person name="Semple C.A."/>
            <person name="Seno S."/>
            <person name="Sessa L."/>
            <person name="Sheng Y."/>
            <person name="Shibata Y."/>
            <person name="Shimada H."/>
            <person name="Shimada K."/>
            <person name="Silva D."/>
            <person name="Sinclair B."/>
            <person name="Sperling S."/>
            <person name="Stupka E."/>
            <person name="Sugiura K."/>
            <person name="Sultana R."/>
            <person name="Takenaka Y."/>
            <person name="Taki K."/>
            <person name="Tammoja K."/>
            <person name="Tan S.L."/>
            <person name="Tang S."/>
            <person name="Taylor M.S."/>
            <person name="Tegner J."/>
            <person name="Teichmann S.A."/>
            <person name="Ueda H.R."/>
            <person name="van Nimwegen E."/>
            <person name="Verardo R."/>
            <person name="Wei C.L."/>
            <person name="Yagi K."/>
            <person name="Yamanishi H."/>
            <person name="Zabarovsky E."/>
            <person name="Zhu S."/>
            <person name="Zimmer A."/>
            <person name="Hide W."/>
            <person name="Bult C."/>
            <person name="Grimmond S.M."/>
            <person name="Teasdale R.D."/>
            <person name="Liu E.T."/>
            <person name="Brusic V."/>
            <person name="Quackenbush J."/>
            <person name="Wahlestedt C."/>
            <person name="Mattick J.S."/>
            <person name="Hume D.A."/>
            <person name="Kai C."/>
            <person name="Sasaki D."/>
            <person name="Tomaru Y."/>
            <person name="Fukuda S."/>
            <person name="Kanamori-Katayama M."/>
            <person name="Suzuki M."/>
            <person name="Aoki J."/>
            <person name="Arakawa T."/>
            <person name="Iida J."/>
            <person name="Imamura K."/>
            <person name="Itoh M."/>
            <person name="Kato T."/>
            <person name="Kawaji H."/>
            <person name="Kawagashira N."/>
            <person name="Kawashima T."/>
            <person name="Kojima M."/>
            <person name="Kondo S."/>
            <person name="Konno H."/>
            <person name="Nakano K."/>
            <person name="Ninomiya N."/>
            <person name="Nishio T."/>
            <person name="Okada M."/>
            <person name="Plessy C."/>
            <person name="Shibata K."/>
            <person name="Shiraki T."/>
            <person name="Suzuki S."/>
            <person name="Tagami M."/>
            <person name="Waki K."/>
            <person name="Watahiki A."/>
            <person name="Okamura-Oho Y."/>
            <person name="Suzuki H."/>
            <person name="Kawai J."/>
            <person name="Hayashizaki Y."/>
        </authorList>
    </citation>
    <scope>NUCLEOTIDE SEQUENCE [LARGE SCALE MRNA]</scope>
    <source>
        <strain>C57BL/6J</strain>
        <tissue>Pancreas</tissue>
        <tissue>Thymus</tissue>
    </source>
</reference>
<reference key="2">
    <citation type="journal article" date="2009" name="Immunity">
        <title>The phagosomal proteome in interferon-gamma-activated macrophages.</title>
        <authorList>
            <person name="Trost M."/>
            <person name="English L."/>
            <person name="Lemieux S."/>
            <person name="Courcelles M."/>
            <person name="Desjardins M."/>
            <person name="Thibault P."/>
        </authorList>
    </citation>
    <scope>PHOSPHORYLATION [LARGE SCALE ANALYSIS] AT SER-82</scope>
    <scope>IDENTIFICATION BY MASS SPECTROMETRY [LARGE SCALE ANALYSIS]</scope>
</reference>
<reference key="3">
    <citation type="journal article" date="2010" name="Cell">
        <title>A tissue-specific atlas of mouse protein phosphorylation and expression.</title>
        <authorList>
            <person name="Huttlin E.L."/>
            <person name="Jedrychowski M.P."/>
            <person name="Elias J.E."/>
            <person name="Goswami T."/>
            <person name="Rad R."/>
            <person name="Beausoleil S.A."/>
            <person name="Villen J."/>
            <person name="Haas W."/>
            <person name="Sowa M.E."/>
            <person name="Gygi S.P."/>
        </authorList>
    </citation>
    <scope>PHOSPHORYLATION [LARGE SCALE ANALYSIS] AT SER-82</scope>
    <scope>IDENTIFICATION BY MASS SPECTROMETRY [LARGE SCALE ANALYSIS]</scope>
    <source>
        <tissue>Brain</tissue>
        <tissue>Brown adipose tissue</tissue>
        <tissue>Kidney</tissue>
        <tissue>Lung</tissue>
        <tissue>Pancreas</tissue>
        <tissue>Spleen</tissue>
        <tissue>Testis</tissue>
    </source>
</reference>
<reference key="4">
    <citation type="journal article" date="2014" name="Mol. Cell. Proteomics">
        <title>Immunoaffinity enrichment and mass spectrometry analysis of protein methylation.</title>
        <authorList>
            <person name="Guo A."/>
            <person name="Gu H."/>
            <person name="Zhou J."/>
            <person name="Mulhern D."/>
            <person name="Wang Y."/>
            <person name="Lee K.A."/>
            <person name="Yang V."/>
            <person name="Aguiar M."/>
            <person name="Kornhauser J."/>
            <person name="Jia X."/>
            <person name="Ren J."/>
            <person name="Beausoleil S.A."/>
            <person name="Silva J.C."/>
            <person name="Vemulapalli V."/>
            <person name="Bedford M.T."/>
            <person name="Comb M.J."/>
        </authorList>
    </citation>
    <scope>METHYLATION [LARGE SCALE ANALYSIS] AT ARG-395</scope>
    <scope>IDENTIFICATION BY MASS SPECTROMETRY [LARGE SCALE ANALYSIS]</scope>
    <source>
        <tissue>Brain</tissue>
    </source>
</reference>
<name>SWAHC_MOUSE</name>
<dbReference type="EMBL" id="AK030944">
    <property type="protein sequence ID" value="BAC27191.1"/>
    <property type="molecule type" value="mRNA"/>
</dbReference>
<dbReference type="EMBL" id="AK050497">
    <property type="protein sequence ID" value="BAC34291.1"/>
    <property type="molecule type" value="mRNA"/>
</dbReference>
<dbReference type="CCDS" id="CCDS59544.1"/>
<dbReference type="RefSeq" id="NP_766527.3">
    <property type="nucleotide sequence ID" value="NM_172939.3"/>
</dbReference>
<dbReference type="SMR" id="Q8C0J6"/>
<dbReference type="BioGRID" id="234481">
    <property type="interactions" value="2"/>
</dbReference>
<dbReference type="FunCoup" id="Q8C0J6">
    <property type="interactions" value="33"/>
</dbReference>
<dbReference type="IntAct" id="Q8C0J6">
    <property type="interactions" value="1"/>
</dbReference>
<dbReference type="STRING" id="10090.ENSMUSP00000138351"/>
<dbReference type="iPTMnet" id="Q8C0J6"/>
<dbReference type="PhosphoSitePlus" id="Q8C0J6"/>
<dbReference type="jPOST" id="Q8C0J6"/>
<dbReference type="PaxDb" id="10090-ENSMUSP00000138351"/>
<dbReference type="PeptideAtlas" id="Q8C0J6"/>
<dbReference type="ProteomicsDB" id="254700"/>
<dbReference type="Pumba" id="Q8C0J6"/>
<dbReference type="Antibodypedia" id="33168">
    <property type="antibodies" value="102 antibodies from 18 providers"/>
</dbReference>
<dbReference type="DNASU" id="268301"/>
<dbReference type="Ensembl" id="ENSMUST00000182161.2">
    <property type="protein sequence ID" value="ENSMUSP00000138351.2"/>
    <property type="gene ID" value="ENSMUSG00000098188.2"/>
</dbReference>
<dbReference type="GeneID" id="268301"/>
<dbReference type="KEGG" id="mmu:268301"/>
<dbReference type="UCSC" id="uc011xed.1">
    <property type="organism name" value="mouse"/>
</dbReference>
<dbReference type="AGR" id="MGI:3606051"/>
<dbReference type="CTD" id="65124"/>
<dbReference type="MGI" id="MGI:3606051">
    <property type="gene designation" value="Sowahc"/>
</dbReference>
<dbReference type="VEuPathDB" id="HostDB:ENSMUSG00000098188"/>
<dbReference type="eggNOG" id="ENOG502QVDE">
    <property type="taxonomic scope" value="Eukaryota"/>
</dbReference>
<dbReference type="GeneTree" id="ENSGT00950000183003"/>
<dbReference type="HOGENOM" id="CLU_041239_2_0_1"/>
<dbReference type="InParanoid" id="Q8C0J6"/>
<dbReference type="OMA" id="RYCAPEP"/>
<dbReference type="OrthoDB" id="60433at2759"/>
<dbReference type="PhylomeDB" id="Q8C0J6"/>
<dbReference type="Reactome" id="R-MMU-8980692">
    <property type="pathway name" value="RHOA GTPase cycle"/>
</dbReference>
<dbReference type="Reactome" id="R-MMU-9013026">
    <property type="pathway name" value="RHOB GTPase cycle"/>
</dbReference>
<dbReference type="Reactome" id="R-MMU-9035034">
    <property type="pathway name" value="RHOF GTPase cycle"/>
</dbReference>
<dbReference type="BioGRID-ORCS" id="268301">
    <property type="hits" value="1 hit in 73 CRISPR screens"/>
</dbReference>
<dbReference type="ChiTaRS" id="Sowahc">
    <property type="organism name" value="mouse"/>
</dbReference>
<dbReference type="PRO" id="PR:Q8C0J6"/>
<dbReference type="Proteomes" id="UP000000589">
    <property type="component" value="Chromosome 10"/>
</dbReference>
<dbReference type="RNAct" id="Q8C0J6">
    <property type="molecule type" value="protein"/>
</dbReference>
<dbReference type="Bgee" id="ENSMUSG00000098188">
    <property type="expression patterns" value="Expressed in urinary bladder urothelium and 224 other cell types or tissues"/>
</dbReference>
<dbReference type="Gene3D" id="1.25.40.20">
    <property type="entry name" value="Ankyrin repeat-containing domain"/>
    <property type="match status" value="1"/>
</dbReference>
<dbReference type="InterPro" id="IPR002110">
    <property type="entry name" value="Ankyrin_rpt"/>
</dbReference>
<dbReference type="InterPro" id="IPR036770">
    <property type="entry name" value="Ankyrin_rpt-contain_sf"/>
</dbReference>
<dbReference type="PANTHER" id="PTHR14491:SF4">
    <property type="entry name" value="ANKYRIN REPEAT DOMAIN-CONTAINING PROTEIN SOWAHC"/>
    <property type="match status" value="1"/>
</dbReference>
<dbReference type="PANTHER" id="PTHR14491">
    <property type="entry name" value="SOSONDOWAH, ISOFORM G"/>
    <property type="match status" value="1"/>
</dbReference>
<dbReference type="Pfam" id="PF12796">
    <property type="entry name" value="Ank_2"/>
    <property type="match status" value="1"/>
</dbReference>
<dbReference type="SMART" id="SM00248">
    <property type="entry name" value="ANK"/>
    <property type="match status" value="2"/>
</dbReference>
<dbReference type="SUPFAM" id="SSF48403">
    <property type="entry name" value="Ankyrin repeat"/>
    <property type="match status" value="1"/>
</dbReference>
<dbReference type="PROSITE" id="PS50297">
    <property type="entry name" value="ANK_REP_REGION"/>
    <property type="match status" value="1"/>
</dbReference>
<dbReference type="PROSITE" id="PS50088">
    <property type="entry name" value="ANK_REPEAT"/>
    <property type="match status" value="1"/>
</dbReference>
<accession>Q8C0J6</accession>
<accession>Q8BWN1</accession>
<feature type="chain" id="PRO_0000274341" description="Ankyrin repeat domain-containing protein SOWAHC">
    <location>
        <begin position="1"/>
        <end position="512"/>
    </location>
</feature>
<feature type="repeat" description="ANK 1">
    <location>
        <begin position="288"/>
        <end position="317"/>
    </location>
</feature>
<feature type="repeat" description="ANK 2">
    <location>
        <begin position="327"/>
        <end position="357"/>
    </location>
</feature>
<feature type="region of interest" description="Disordered" evidence="2">
    <location>
        <begin position="126"/>
        <end position="248"/>
    </location>
</feature>
<feature type="region of interest" description="Disordered" evidence="2">
    <location>
        <begin position="427"/>
        <end position="500"/>
    </location>
</feature>
<feature type="compositionally biased region" description="Low complexity" evidence="2">
    <location>
        <begin position="173"/>
        <end position="186"/>
    </location>
</feature>
<feature type="compositionally biased region" description="Gly residues" evidence="2">
    <location>
        <begin position="214"/>
        <end position="228"/>
    </location>
</feature>
<feature type="compositionally biased region" description="Low complexity" evidence="2">
    <location>
        <begin position="229"/>
        <end position="248"/>
    </location>
</feature>
<feature type="compositionally biased region" description="Basic residues" evidence="2">
    <location>
        <begin position="453"/>
        <end position="462"/>
    </location>
</feature>
<feature type="compositionally biased region" description="Acidic residues" evidence="2">
    <location>
        <begin position="481"/>
        <end position="492"/>
    </location>
</feature>
<feature type="modified residue" description="Phosphoserine" evidence="4 5">
    <location>
        <position position="82"/>
    </location>
</feature>
<feature type="modified residue" description="Phosphoserine" evidence="1">
    <location>
        <position position="125"/>
    </location>
</feature>
<feature type="modified residue" description="Phosphoserine" evidence="1">
    <location>
        <position position="205"/>
    </location>
</feature>
<feature type="modified residue" description="Omega-N-methylarginine" evidence="6">
    <location>
        <position position="395"/>
    </location>
</feature>
<feature type="sequence conflict" description="In Ref. 1; BAC34291." evidence="3" ref="1">
    <original>NAVATV</original>
    <variation>MPWPPL</variation>
    <location>
        <begin position="55"/>
        <end position="60"/>
    </location>
</feature>
<feature type="sequence conflict" description="In Ref. 1; BAC34291." evidence="3" ref="1">
    <original>E</original>
    <variation>Q</variation>
    <location>
        <position position="119"/>
    </location>
</feature>
<feature type="sequence conflict" description="In Ref. 1; BAC34291." evidence="3" ref="1">
    <original>Q</original>
    <variation>K</variation>
    <location>
        <position position="123"/>
    </location>
</feature>
<feature type="sequence conflict" description="In Ref. 1; BAC34291." evidence="3" ref="1">
    <original>S</original>
    <variation>T</variation>
    <location>
        <position position="167"/>
    </location>
</feature>
<feature type="sequence conflict" description="In Ref. 1; BAC27191." evidence="3" ref="1">
    <original>T</original>
    <variation>S</variation>
    <location>
        <position position="330"/>
    </location>
</feature>
<comment type="similarity">
    <text evidence="3">Belongs to the SOWAH family.</text>
</comment>
<keyword id="KW-0040">ANK repeat</keyword>
<keyword id="KW-0488">Methylation</keyword>
<keyword id="KW-0597">Phosphoprotein</keyword>
<keyword id="KW-1185">Reference proteome</keyword>
<keyword id="KW-0677">Repeat</keyword>
<organism>
    <name type="scientific">Mus musculus</name>
    <name type="common">Mouse</name>
    <dbReference type="NCBI Taxonomy" id="10090"/>
    <lineage>
        <taxon>Eukaryota</taxon>
        <taxon>Metazoa</taxon>
        <taxon>Chordata</taxon>
        <taxon>Craniata</taxon>
        <taxon>Vertebrata</taxon>
        <taxon>Euteleostomi</taxon>
        <taxon>Mammalia</taxon>
        <taxon>Eutheria</taxon>
        <taxon>Euarchontoglires</taxon>
        <taxon>Glires</taxon>
        <taxon>Rodentia</taxon>
        <taxon>Myomorpha</taxon>
        <taxon>Muroidea</taxon>
        <taxon>Muridae</taxon>
        <taxon>Murinae</taxon>
        <taxon>Mus</taxon>
        <taxon>Mus</taxon>
    </lineage>
</organism>